<comment type="function">
    <text evidence="1">NDH-1 shuttles electrons from NADH, via FMN and iron-sulfur (Fe-S) centers, to quinones in the respiratory chain. The immediate electron acceptor for the enzyme in this species is believed to be ubiquinone. Couples the redox reaction to proton translocation (for every two electrons transferred, four hydrogen ions are translocated across the cytoplasmic membrane), and thus conserves the redox energy in a proton gradient.</text>
</comment>
<comment type="catalytic activity">
    <reaction evidence="1">
        <text>a quinone + NADH + 5 H(+)(in) = a quinol + NAD(+) + 4 H(+)(out)</text>
        <dbReference type="Rhea" id="RHEA:57888"/>
        <dbReference type="ChEBI" id="CHEBI:15378"/>
        <dbReference type="ChEBI" id="CHEBI:24646"/>
        <dbReference type="ChEBI" id="CHEBI:57540"/>
        <dbReference type="ChEBI" id="CHEBI:57945"/>
        <dbReference type="ChEBI" id="CHEBI:132124"/>
    </reaction>
</comment>
<comment type="subunit">
    <text evidence="1">NDH-1 is composed of 14 different subunits. Subunits NuoB, C, D, E, F, and G constitute the peripheral sector of the complex.</text>
</comment>
<comment type="subcellular location">
    <subcellularLocation>
        <location evidence="1">Cell inner membrane</location>
        <topology evidence="1">Peripheral membrane protein</topology>
        <orientation evidence="1">Cytoplasmic side</orientation>
    </subcellularLocation>
</comment>
<comment type="similarity">
    <text evidence="1">Belongs to the complex I 49 kDa subunit family.</text>
</comment>
<feature type="chain" id="PRO_0000371919" description="NADH-quinone oxidoreductase subunit D">
    <location>
        <begin position="1"/>
        <end position="417"/>
    </location>
</feature>
<accession>Q1LPW0</accession>
<keyword id="KW-0997">Cell inner membrane</keyword>
<keyword id="KW-1003">Cell membrane</keyword>
<keyword id="KW-0472">Membrane</keyword>
<keyword id="KW-0520">NAD</keyword>
<keyword id="KW-0874">Quinone</keyword>
<keyword id="KW-1185">Reference proteome</keyword>
<keyword id="KW-1278">Translocase</keyword>
<keyword id="KW-0813">Transport</keyword>
<keyword id="KW-0830">Ubiquinone</keyword>
<dbReference type="EC" id="7.1.1.-" evidence="1"/>
<dbReference type="EMBL" id="CP000352">
    <property type="protein sequence ID" value="ABF07816.1"/>
    <property type="molecule type" value="Genomic_DNA"/>
</dbReference>
<dbReference type="RefSeq" id="WP_011515748.1">
    <property type="nucleotide sequence ID" value="NC_007973.1"/>
</dbReference>
<dbReference type="SMR" id="Q1LPW0"/>
<dbReference type="STRING" id="266264.Rmet_0930"/>
<dbReference type="KEGG" id="rme:Rmet_0930"/>
<dbReference type="eggNOG" id="COG0649">
    <property type="taxonomic scope" value="Bacteria"/>
</dbReference>
<dbReference type="HOGENOM" id="CLU_015134_1_1_4"/>
<dbReference type="Proteomes" id="UP000002429">
    <property type="component" value="Chromosome"/>
</dbReference>
<dbReference type="GO" id="GO:0005886">
    <property type="term" value="C:plasma membrane"/>
    <property type="evidence" value="ECO:0007669"/>
    <property type="project" value="UniProtKB-SubCell"/>
</dbReference>
<dbReference type="GO" id="GO:0051287">
    <property type="term" value="F:NAD binding"/>
    <property type="evidence" value="ECO:0007669"/>
    <property type="project" value="InterPro"/>
</dbReference>
<dbReference type="GO" id="GO:0050136">
    <property type="term" value="F:NADH:ubiquinone reductase (non-electrogenic) activity"/>
    <property type="evidence" value="ECO:0007669"/>
    <property type="project" value="UniProtKB-UniRule"/>
</dbReference>
<dbReference type="GO" id="GO:0048038">
    <property type="term" value="F:quinone binding"/>
    <property type="evidence" value="ECO:0007669"/>
    <property type="project" value="UniProtKB-KW"/>
</dbReference>
<dbReference type="FunFam" id="1.10.645.10:FF:000005">
    <property type="entry name" value="NADH-quinone oxidoreductase subunit D"/>
    <property type="match status" value="1"/>
</dbReference>
<dbReference type="Gene3D" id="1.10.645.10">
    <property type="entry name" value="Cytochrome-c3 Hydrogenase, chain B"/>
    <property type="match status" value="1"/>
</dbReference>
<dbReference type="HAMAP" id="MF_01358">
    <property type="entry name" value="NDH1_NuoD"/>
    <property type="match status" value="1"/>
</dbReference>
<dbReference type="InterPro" id="IPR001135">
    <property type="entry name" value="NADH_Q_OxRdtase_suD"/>
</dbReference>
<dbReference type="InterPro" id="IPR014029">
    <property type="entry name" value="NADH_UbQ_OxRdtase_49kDa_CS"/>
</dbReference>
<dbReference type="InterPro" id="IPR022885">
    <property type="entry name" value="NDH1_su_D/H"/>
</dbReference>
<dbReference type="InterPro" id="IPR029014">
    <property type="entry name" value="NiFe-Hase_large"/>
</dbReference>
<dbReference type="NCBIfam" id="TIGR01962">
    <property type="entry name" value="NuoD"/>
    <property type="match status" value="1"/>
</dbReference>
<dbReference type="NCBIfam" id="NF004739">
    <property type="entry name" value="PRK06075.1"/>
    <property type="match status" value="1"/>
</dbReference>
<dbReference type="PANTHER" id="PTHR11993:SF10">
    <property type="entry name" value="NADH DEHYDROGENASE [UBIQUINONE] IRON-SULFUR PROTEIN 2, MITOCHONDRIAL"/>
    <property type="match status" value="1"/>
</dbReference>
<dbReference type="PANTHER" id="PTHR11993">
    <property type="entry name" value="NADH-UBIQUINONE OXIDOREDUCTASE 49 KDA SUBUNIT"/>
    <property type="match status" value="1"/>
</dbReference>
<dbReference type="Pfam" id="PF00346">
    <property type="entry name" value="Complex1_49kDa"/>
    <property type="match status" value="1"/>
</dbReference>
<dbReference type="SUPFAM" id="SSF56762">
    <property type="entry name" value="HydB/Nqo4-like"/>
    <property type="match status" value="1"/>
</dbReference>
<dbReference type="PROSITE" id="PS00535">
    <property type="entry name" value="COMPLEX1_49K"/>
    <property type="match status" value="1"/>
</dbReference>
<protein>
    <recommendedName>
        <fullName evidence="1">NADH-quinone oxidoreductase subunit D</fullName>
        <ecNumber evidence="1">7.1.1.-</ecNumber>
    </recommendedName>
    <alternativeName>
        <fullName evidence="1">NADH dehydrogenase I subunit D</fullName>
    </alternativeName>
    <alternativeName>
        <fullName evidence="1">NDH-1 subunit D</fullName>
    </alternativeName>
</protein>
<organism>
    <name type="scientific">Cupriavidus metallidurans (strain ATCC 43123 / DSM 2839 / NBRC 102507 / CH34)</name>
    <name type="common">Ralstonia metallidurans</name>
    <dbReference type="NCBI Taxonomy" id="266264"/>
    <lineage>
        <taxon>Bacteria</taxon>
        <taxon>Pseudomonadati</taxon>
        <taxon>Pseudomonadota</taxon>
        <taxon>Betaproteobacteria</taxon>
        <taxon>Burkholderiales</taxon>
        <taxon>Burkholderiaceae</taxon>
        <taxon>Cupriavidus</taxon>
    </lineage>
</organism>
<name>NUOD_CUPMC</name>
<reference key="1">
    <citation type="journal article" date="2010" name="PLoS ONE">
        <title>The complete genome sequence of Cupriavidus metallidurans strain CH34, a master survivalist in harsh and anthropogenic environments.</title>
        <authorList>
            <person name="Janssen P.J."/>
            <person name="Van Houdt R."/>
            <person name="Moors H."/>
            <person name="Monsieurs P."/>
            <person name="Morin N."/>
            <person name="Michaux A."/>
            <person name="Benotmane M.A."/>
            <person name="Leys N."/>
            <person name="Vallaeys T."/>
            <person name="Lapidus A."/>
            <person name="Monchy S."/>
            <person name="Medigue C."/>
            <person name="Taghavi S."/>
            <person name="McCorkle S."/>
            <person name="Dunn J."/>
            <person name="van der Lelie D."/>
            <person name="Mergeay M."/>
        </authorList>
    </citation>
    <scope>NUCLEOTIDE SEQUENCE [LARGE SCALE GENOMIC DNA]</scope>
    <source>
        <strain>ATCC 43123 / DSM 2839 / NBRC 102507 / CH34</strain>
    </source>
</reference>
<sequence>MADIKNYTLNFGPQHPAAHGVLRLVLELDGEVIQRADPHIGLLHRATEKLAEQKTWIQSVPYMDRLDYVSMMVNEHAYVMAIERLLGLEVPIRAQYIRVMFDEITRLLNHLMWIGSHALDVGAMAVFLYAFREREDMFDMYEAVSGARMHAAYYRPGGVYRDLPDTMPQYRASKVHNEKAIKVMNEARSGSLLDFIEDFTNRFPTYVDEYETLLTDNRIWKQRLVDIGVVTPERALQMGFTGPMLRGSGIEWDLRKKQPYEVYDKMDFDIPVGTAGDCYSRYLVRVEEMRQSNRIIKQCIDWLRRNPGPVITENHKVAPPSRVDMKSNMEELIHHFKLFTEGIHVPAGEAYAAVEHPKGEFGIYAISDGANKPYRLKIRAPGFVHLAALDEMARGHMIADAVTIIGTQDIVFGEIDR</sequence>
<gene>
    <name evidence="1" type="primary">nuoD</name>
    <name type="ordered locus">Rmet_0930</name>
</gene>
<proteinExistence type="inferred from homology"/>
<evidence type="ECO:0000255" key="1">
    <source>
        <dbReference type="HAMAP-Rule" id="MF_01358"/>
    </source>
</evidence>